<sequence length="404" mass="43568">MSPSDVPINWKRNLTVTWLGCFLTGAAFSLVMPFLPLYVEQLGVTGHSALNMWSGLVFSITFLFSAIASPFWGGLADRKGRKIMLLRSALGMAIVMLLMGMAQNIWQFLILRALLGLLGGFIPNANALIATQAPRHKSGWALGTLSTGGVSGALLGPLAGGLLADHYGLRPVFFITASVLFICFLLTFFFIRENFLPVSKKEMLHVREVVASLKNPRLVLSLFVTTLIIQVATGSIAPILTLYVRELAGNVSNIAFISGMIASVPGVAALLSAPRLGKLGDRIGPEKILIVALIISVLLLIPMSFVQTPWQLALLRFLLGAADGALLPAVQTLLVYNSTNQIAGRIFSYNQSFRDIGNVTGPLMGAAISASYGFRAVFCVTAGVVLFNAIYSWNSLRRRRLAIE</sequence>
<accession>B5BBD5</accession>
<dbReference type="EMBL" id="FM200053">
    <property type="protein sequence ID" value="CAR59764.1"/>
    <property type="molecule type" value="Genomic_DNA"/>
</dbReference>
<dbReference type="RefSeq" id="WP_000075043.1">
    <property type="nucleotide sequence ID" value="NC_011147.1"/>
</dbReference>
<dbReference type="SMR" id="B5BBD5"/>
<dbReference type="KEGG" id="sek:SSPA1578"/>
<dbReference type="HOGENOM" id="CLU_001265_57_3_6"/>
<dbReference type="Proteomes" id="UP000001869">
    <property type="component" value="Chromosome"/>
</dbReference>
<dbReference type="GO" id="GO:0005886">
    <property type="term" value="C:plasma membrane"/>
    <property type="evidence" value="ECO:0007669"/>
    <property type="project" value="UniProtKB-SubCell"/>
</dbReference>
<dbReference type="GO" id="GO:0022857">
    <property type="term" value="F:transmembrane transporter activity"/>
    <property type="evidence" value="ECO:0007669"/>
    <property type="project" value="UniProtKB-UniRule"/>
</dbReference>
<dbReference type="CDD" id="cd17391">
    <property type="entry name" value="MFS_MdtG_MDR_like"/>
    <property type="match status" value="1"/>
</dbReference>
<dbReference type="FunFam" id="1.20.1250.20:FF:000020">
    <property type="entry name" value="Multidrug resistance protein MdtG"/>
    <property type="match status" value="1"/>
</dbReference>
<dbReference type="FunFam" id="1.20.1250.20:FF:000022">
    <property type="entry name" value="Multidrug resistance protein MdtG"/>
    <property type="match status" value="1"/>
</dbReference>
<dbReference type="Gene3D" id="1.20.1250.20">
    <property type="entry name" value="MFS general substrate transporter like domains"/>
    <property type="match status" value="2"/>
</dbReference>
<dbReference type="HAMAP" id="MF_01528">
    <property type="entry name" value="MFS_MdtG"/>
    <property type="match status" value="1"/>
</dbReference>
<dbReference type="InterPro" id="IPR011701">
    <property type="entry name" value="MFS"/>
</dbReference>
<dbReference type="InterPro" id="IPR020846">
    <property type="entry name" value="MFS_dom"/>
</dbReference>
<dbReference type="InterPro" id="IPR050497">
    <property type="entry name" value="MFS_MdtG_subfamily"/>
</dbReference>
<dbReference type="InterPro" id="IPR005828">
    <property type="entry name" value="MFS_sugar_transport-like"/>
</dbReference>
<dbReference type="InterPro" id="IPR036259">
    <property type="entry name" value="MFS_trans_sf"/>
</dbReference>
<dbReference type="InterPro" id="IPR023692">
    <property type="entry name" value="Mutidrug-R_MdtG"/>
</dbReference>
<dbReference type="InterPro" id="IPR001958">
    <property type="entry name" value="Tet-R_TetA/multi-R_MdtG-like"/>
</dbReference>
<dbReference type="NCBIfam" id="NF007372">
    <property type="entry name" value="PRK09874.1"/>
    <property type="match status" value="1"/>
</dbReference>
<dbReference type="PANTHER" id="PTHR43414">
    <property type="entry name" value="MULTIDRUG RESISTANCE PROTEIN MDTG"/>
    <property type="match status" value="1"/>
</dbReference>
<dbReference type="PANTHER" id="PTHR43414:SF6">
    <property type="entry name" value="MULTIDRUG RESISTANCE PROTEIN MDTG"/>
    <property type="match status" value="1"/>
</dbReference>
<dbReference type="Pfam" id="PF07690">
    <property type="entry name" value="MFS_1"/>
    <property type="match status" value="1"/>
</dbReference>
<dbReference type="Pfam" id="PF00083">
    <property type="entry name" value="Sugar_tr"/>
    <property type="match status" value="1"/>
</dbReference>
<dbReference type="PRINTS" id="PR01035">
    <property type="entry name" value="TCRTETA"/>
</dbReference>
<dbReference type="SUPFAM" id="SSF103473">
    <property type="entry name" value="MFS general substrate transporter"/>
    <property type="match status" value="1"/>
</dbReference>
<dbReference type="PROSITE" id="PS50850">
    <property type="entry name" value="MFS"/>
    <property type="match status" value="1"/>
</dbReference>
<comment type="subcellular location">
    <subcellularLocation>
        <location evidence="1">Cell inner membrane</location>
        <topology evidence="1">Multi-pass membrane protein</topology>
    </subcellularLocation>
</comment>
<comment type="similarity">
    <text evidence="1">Belongs to the major facilitator superfamily. DHA1 family. MdtG (TC 2.A.1.2.20) subfamily.</text>
</comment>
<keyword id="KW-0997">Cell inner membrane</keyword>
<keyword id="KW-1003">Cell membrane</keyword>
<keyword id="KW-0472">Membrane</keyword>
<keyword id="KW-0812">Transmembrane</keyword>
<keyword id="KW-1133">Transmembrane helix</keyword>
<keyword id="KW-0813">Transport</keyword>
<reference key="1">
    <citation type="journal article" date="2009" name="BMC Genomics">
        <title>Pseudogene accumulation in the evolutionary histories of Salmonella enterica serovars Paratyphi A and Typhi.</title>
        <authorList>
            <person name="Holt K.E."/>
            <person name="Thomson N.R."/>
            <person name="Wain J."/>
            <person name="Langridge G.C."/>
            <person name="Hasan R."/>
            <person name="Bhutta Z.A."/>
            <person name="Quail M.A."/>
            <person name="Norbertczak H."/>
            <person name="Walker D."/>
            <person name="Simmonds M."/>
            <person name="White B."/>
            <person name="Bason N."/>
            <person name="Mungall K."/>
            <person name="Dougan G."/>
            <person name="Parkhill J."/>
        </authorList>
    </citation>
    <scope>NUCLEOTIDE SEQUENCE [LARGE SCALE GENOMIC DNA]</scope>
    <source>
        <strain>AKU_12601</strain>
    </source>
</reference>
<proteinExistence type="inferred from homology"/>
<name>MDTG_SALPK</name>
<gene>
    <name evidence="1" type="primary">mdtG</name>
    <name type="ordered locus">SSPA1578</name>
</gene>
<feature type="chain" id="PRO_1000200792" description="Multidrug resistance protein MdtG">
    <location>
        <begin position="1"/>
        <end position="404"/>
    </location>
</feature>
<feature type="transmembrane region" description="Helical" evidence="1">
    <location>
        <begin position="19"/>
        <end position="39"/>
    </location>
</feature>
<feature type="transmembrane region" description="Helical" evidence="1">
    <location>
        <begin position="56"/>
        <end position="76"/>
    </location>
</feature>
<feature type="transmembrane region" description="Helical" evidence="1">
    <location>
        <begin position="90"/>
        <end position="110"/>
    </location>
</feature>
<feature type="transmembrane region" description="Helical" evidence="1">
    <location>
        <begin position="113"/>
        <end position="133"/>
    </location>
</feature>
<feature type="transmembrane region" description="Helical" evidence="1">
    <location>
        <begin position="144"/>
        <end position="164"/>
    </location>
</feature>
<feature type="transmembrane region" description="Helical" evidence="1">
    <location>
        <begin position="171"/>
        <end position="191"/>
    </location>
</feature>
<feature type="transmembrane region" description="Helical" evidence="1">
    <location>
        <begin position="222"/>
        <end position="242"/>
    </location>
</feature>
<feature type="transmembrane region" description="Helical" evidence="1">
    <location>
        <begin position="254"/>
        <end position="274"/>
    </location>
</feature>
<feature type="transmembrane region" description="Helical" evidence="1">
    <location>
        <begin position="288"/>
        <end position="308"/>
    </location>
</feature>
<feature type="transmembrane region" description="Helical" evidence="1">
    <location>
        <begin position="317"/>
        <end position="337"/>
    </location>
</feature>
<feature type="transmembrane region" description="Helical" evidence="1">
    <location>
        <begin position="376"/>
        <end position="396"/>
    </location>
</feature>
<evidence type="ECO:0000255" key="1">
    <source>
        <dbReference type="HAMAP-Rule" id="MF_01528"/>
    </source>
</evidence>
<protein>
    <recommendedName>
        <fullName evidence="1">Multidrug resistance protein MdtG</fullName>
    </recommendedName>
</protein>
<organism>
    <name type="scientific">Salmonella paratyphi A (strain AKU_12601)</name>
    <dbReference type="NCBI Taxonomy" id="554290"/>
    <lineage>
        <taxon>Bacteria</taxon>
        <taxon>Pseudomonadati</taxon>
        <taxon>Pseudomonadota</taxon>
        <taxon>Gammaproteobacteria</taxon>
        <taxon>Enterobacterales</taxon>
        <taxon>Enterobacteriaceae</taxon>
        <taxon>Salmonella</taxon>
    </lineage>
</organism>